<accession>A8FEM5</accession>
<protein>
    <recommendedName>
        <fullName evidence="1">Cytidylate kinase</fullName>
        <shortName evidence="1">CK</shortName>
        <ecNumber evidence="1">2.7.4.25</ecNumber>
    </recommendedName>
    <alternativeName>
        <fullName evidence="1">Cytidine monophosphate kinase</fullName>
        <shortName evidence="1">CMP kinase</shortName>
    </alternativeName>
</protein>
<feature type="chain" id="PRO_1000058974" description="Cytidylate kinase">
    <location>
        <begin position="1"/>
        <end position="225"/>
    </location>
</feature>
<feature type="binding site" evidence="1">
    <location>
        <begin position="11"/>
        <end position="19"/>
    </location>
    <ligand>
        <name>ATP</name>
        <dbReference type="ChEBI" id="CHEBI:30616"/>
    </ligand>
</feature>
<name>KCY_BACP2</name>
<gene>
    <name evidence="1" type="primary">cmk</name>
    <name type="ordered locus">BPUM_2022</name>
</gene>
<organism>
    <name type="scientific">Bacillus pumilus (strain SAFR-032)</name>
    <dbReference type="NCBI Taxonomy" id="315750"/>
    <lineage>
        <taxon>Bacteria</taxon>
        <taxon>Bacillati</taxon>
        <taxon>Bacillota</taxon>
        <taxon>Bacilli</taxon>
        <taxon>Bacillales</taxon>
        <taxon>Bacillaceae</taxon>
        <taxon>Bacillus</taxon>
    </lineage>
</organism>
<proteinExistence type="inferred from homology"/>
<comment type="catalytic activity">
    <reaction evidence="1">
        <text>CMP + ATP = CDP + ADP</text>
        <dbReference type="Rhea" id="RHEA:11600"/>
        <dbReference type="ChEBI" id="CHEBI:30616"/>
        <dbReference type="ChEBI" id="CHEBI:58069"/>
        <dbReference type="ChEBI" id="CHEBI:60377"/>
        <dbReference type="ChEBI" id="CHEBI:456216"/>
        <dbReference type="EC" id="2.7.4.25"/>
    </reaction>
</comment>
<comment type="catalytic activity">
    <reaction evidence="1">
        <text>dCMP + ATP = dCDP + ADP</text>
        <dbReference type="Rhea" id="RHEA:25094"/>
        <dbReference type="ChEBI" id="CHEBI:30616"/>
        <dbReference type="ChEBI" id="CHEBI:57566"/>
        <dbReference type="ChEBI" id="CHEBI:58593"/>
        <dbReference type="ChEBI" id="CHEBI:456216"/>
        <dbReference type="EC" id="2.7.4.25"/>
    </reaction>
</comment>
<comment type="subcellular location">
    <subcellularLocation>
        <location evidence="1">Cytoplasm</location>
    </subcellularLocation>
</comment>
<comment type="similarity">
    <text evidence="1">Belongs to the cytidylate kinase family. Type 1 subfamily.</text>
</comment>
<sequence>MKKKLSIAIDGPAAAGKSTVAKIVAAKKSYIYIDTGAMYRAITLAALQHGVDLEDEQALDALLKKTVIELVSTGEGQKVHLDNTDVTEEIRTDRVSNQVSVVAKHRAVREEMVRRQQELGKKGGVVMDGRDIGTHVLPDAEVKIFLLASVEERAKRRFEENQKKGYDVNYDQLIEEIARRDKLDSEREVSPLKKADDAIEIDTTSLSIQEVAGKILDAADRVEKQ</sequence>
<reference key="1">
    <citation type="journal article" date="2007" name="PLoS ONE">
        <title>Paradoxical DNA repair and peroxide resistance gene conservation in Bacillus pumilus SAFR-032.</title>
        <authorList>
            <person name="Gioia J."/>
            <person name="Yerrapragada S."/>
            <person name="Qin X."/>
            <person name="Jiang H."/>
            <person name="Igboeli O.C."/>
            <person name="Muzny D."/>
            <person name="Dugan-Rocha S."/>
            <person name="Ding Y."/>
            <person name="Hawes A."/>
            <person name="Liu W."/>
            <person name="Perez L."/>
            <person name="Kovar C."/>
            <person name="Dinh H."/>
            <person name="Lee S."/>
            <person name="Nazareth L."/>
            <person name="Blyth P."/>
            <person name="Holder M."/>
            <person name="Buhay C."/>
            <person name="Tirumalai M.R."/>
            <person name="Liu Y."/>
            <person name="Dasgupta I."/>
            <person name="Bokhetache L."/>
            <person name="Fujita M."/>
            <person name="Karouia F."/>
            <person name="Eswara Moorthy P."/>
            <person name="Siefert J."/>
            <person name="Uzman A."/>
            <person name="Buzumbo P."/>
            <person name="Verma A."/>
            <person name="Zwiya H."/>
            <person name="McWilliams B.D."/>
            <person name="Olowu A."/>
            <person name="Clinkenbeard K.D."/>
            <person name="Newcombe D."/>
            <person name="Golebiewski L."/>
            <person name="Petrosino J.F."/>
            <person name="Nicholson W.L."/>
            <person name="Fox G.E."/>
            <person name="Venkateswaran K."/>
            <person name="Highlander S.K."/>
            <person name="Weinstock G.M."/>
        </authorList>
    </citation>
    <scope>NUCLEOTIDE SEQUENCE [LARGE SCALE GENOMIC DNA]</scope>
    <source>
        <strain>SAFR-032</strain>
    </source>
</reference>
<evidence type="ECO:0000255" key="1">
    <source>
        <dbReference type="HAMAP-Rule" id="MF_00238"/>
    </source>
</evidence>
<dbReference type="EC" id="2.7.4.25" evidence="1"/>
<dbReference type="EMBL" id="CP000813">
    <property type="protein sequence ID" value="ABV62692.1"/>
    <property type="molecule type" value="Genomic_DNA"/>
</dbReference>
<dbReference type="RefSeq" id="WP_012010399.1">
    <property type="nucleotide sequence ID" value="NC_009848.4"/>
</dbReference>
<dbReference type="SMR" id="A8FEM5"/>
<dbReference type="STRING" id="315750.BPUM_2022"/>
<dbReference type="GeneID" id="5621287"/>
<dbReference type="KEGG" id="bpu:BPUM_2022"/>
<dbReference type="eggNOG" id="COG0283">
    <property type="taxonomic scope" value="Bacteria"/>
</dbReference>
<dbReference type="HOGENOM" id="CLU_079959_0_2_9"/>
<dbReference type="OrthoDB" id="9807434at2"/>
<dbReference type="Proteomes" id="UP000001355">
    <property type="component" value="Chromosome"/>
</dbReference>
<dbReference type="GO" id="GO:0005829">
    <property type="term" value="C:cytosol"/>
    <property type="evidence" value="ECO:0007669"/>
    <property type="project" value="TreeGrafter"/>
</dbReference>
<dbReference type="GO" id="GO:0005524">
    <property type="term" value="F:ATP binding"/>
    <property type="evidence" value="ECO:0007669"/>
    <property type="project" value="UniProtKB-UniRule"/>
</dbReference>
<dbReference type="GO" id="GO:0036430">
    <property type="term" value="F:CMP kinase activity"/>
    <property type="evidence" value="ECO:0007669"/>
    <property type="project" value="RHEA"/>
</dbReference>
<dbReference type="GO" id="GO:0036431">
    <property type="term" value="F:dCMP kinase activity"/>
    <property type="evidence" value="ECO:0007669"/>
    <property type="project" value="RHEA"/>
</dbReference>
<dbReference type="GO" id="GO:0015949">
    <property type="term" value="P:nucleobase-containing small molecule interconversion"/>
    <property type="evidence" value="ECO:0007669"/>
    <property type="project" value="TreeGrafter"/>
</dbReference>
<dbReference type="GO" id="GO:0006220">
    <property type="term" value="P:pyrimidine nucleotide metabolic process"/>
    <property type="evidence" value="ECO:0007669"/>
    <property type="project" value="UniProtKB-UniRule"/>
</dbReference>
<dbReference type="CDD" id="cd02020">
    <property type="entry name" value="CMPK"/>
    <property type="match status" value="1"/>
</dbReference>
<dbReference type="FunFam" id="3.40.50.300:FF:000484">
    <property type="entry name" value="Cytidylate kinase"/>
    <property type="match status" value="1"/>
</dbReference>
<dbReference type="Gene3D" id="3.40.50.300">
    <property type="entry name" value="P-loop containing nucleotide triphosphate hydrolases"/>
    <property type="match status" value="1"/>
</dbReference>
<dbReference type="HAMAP" id="MF_00238">
    <property type="entry name" value="Cytidyl_kinase_type1"/>
    <property type="match status" value="1"/>
</dbReference>
<dbReference type="InterPro" id="IPR003136">
    <property type="entry name" value="Cytidylate_kin"/>
</dbReference>
<dbReference type="InterPro" id="IPR011994">
    <property type="entry name" value="Cytidylate_kinase_dom"/>
</dbReference>
<dbReference type="InterPro" id="IPR027417">
    <property type="entry name" value="P-loop_NTPase"/>
</dbReference>
<dbReference type="NCBIfam" id="TIGR00017">
    <property type="entry name" value="cmk"/>
    <property type="match status" value="1"/>
</dbReference>
<dbReference type="PANTHER" id="PTHR21299:SF2">
    <property type="entry name" value="CYTIDYLATE KINASE"/>
    <property type="match status" value="1"/>
</dbReference>
<dbReference type="PANTHER" id="PTHR21299">
    <property type="entry name" value="CYTIDYLATE KINASE/PANTOATE-BETA-ALANINE LIGASE"/>
    <property type="match status" value="1"/>
</dbReference>
<dbReference type="Pfam" id="PF02224">
    <property type="entry name" value="Cytidylate_kin"/>
    <property type="match status" value="1"/>
</dbReference>
<dbReference type="SUPFAM" id="SSF52540">
    <property type="entry name" value="P-loop containing nucleoside triphosphate hydrolases"/>
    <property type="match status" value="1"/>
</dbReference>
<keyword id="KW-0067">ATP-binding</keyword>
<keyword id="KW-0963">Cytoplasm</keyword>
<keyword id="KW-0418">Kinase</keyword>
<keyword id="KW-0547">Nucleotide-binding</keyword>
<keyword id="KW-0808">Transferase</keyword>